<reference key="1">
    <citation type="submission" date="2007-05" db="EMBL/GenBank/DDBJ databases">
        <title>Complete sequence of Pseudomonas putida F1.</title>
        <authorList>
            <consortium name="US DOE Joint Genome Institute"/>
            <person name="Copeland A."/>
            <person name="Lucas S."/>
            <person name="Lapidus A."/>
            <person name="Barry K."/>
            <person name="Detter J.C."/>
            <person name="Glavina del Rio T."/>
            <person name="Hammon N."/>
            <person name="Israni S."/>
            <person name="Dalin E."/>
            <person name="Tice H."/>
            <person name="Pitluck S."/>
            <person name="Chain P."/>
            <person name="Malfatti S."/>
            <person name="Shin M."/>
            <person name="Vergez L."/>
            <person name="Schmutz J."/>
            <person name="Larimer F."/>
            <person name="Land M."/>
            <person name="Hauser L."/>
            <person name="Kyrpides N."/>
            <person name="Lykidis A."/>
            <person name="Parales R."/>
            <person name="Richardson P."/>
        </authorList>
    </citation>
    <scope>NUCLEOTIDE SEQUENCE [LARGE SCALE GENOMIC DNA]</scope>
    <source>
        <strain>ATCC 700007 / DSM 6899 / JCM 31910 / BCRC 17059 / LMG 24140 / F1</strain>
    </source>
</reference>
<keyword id="KW-0686">Riboflavin biosynthesis</keyword>
<keyword id="KW-0808">Transferase</keyword>
<protein>
    <recommendedName>
        <fullName evidence="1">6,7-dimethyl-8-ribityllumazine synthase</fullName>
        <shortName evidence="1">DMRL synthase</shortName>
        <shortName evidence="1">LS</shortName>
        <shortName evidence="1">Lumazine synthase</shortName>
        <ecNumber evidence="1">2.5.1.78</ecNumber>
    </recommendedName>
</protein>
<organism>
    <name type="scientific">Pseudomonas putida (strain ATCC 700007 / DSM 6899 / JCM 31910 / BCRC 17059 / LMG 24140 / F1)</name>
    <dbReference type="NCBI Taxonomy" id="351746"/>
    <lineage>
        <taxon>Bacteria</taxon>
        <taxon>Pseudomonadati</taxon>
        <taxon>Pseudomonadota</taxon>
        <taxon>Gammaproteobacteria</taxon>
        <taxon>Pseudomonadales</taxon>
        <taxon>Pseudomonadaceae</taxon>
        <taxon>Pseudomonas</taxon>
    </lineage>
</organism>
<evidence type="ECO:0000255" key="1">
    <source>
        <dbReference type="HAMAP-Rule" id="MF_00178"/>
    </source>
</evidence>
<proteinExistence type="inferred from homology"/>
<name>RISB_PSEP1</name>
<sequence length="158" mass="16420">MTLKTIEGTFIAPKGRYALVVGRFNSFVVESLVSGAVDALVRHGVSESDITIIRAPGAFEIPLVAQKVAQQGAYDAIIALGAVIRGGTPHFEYVAGECTKGLAQVSMEFGVPVAFGVLTVDSIEQAIERSGTKAGNKGAEAALSALEMVSLLAQLEAK</sequence>
<accession>A5VXW0</accession>
<comment type="function">
    <text evidence="1">Catalyzes the formation of 6,7-dimethyl-8-ribityllumazine by condensation of 5-amino-6-(D-ribitylamino)uracil with 3,4-dihydroxy-2-butanone 4-phosphate. This is the penultimate step in the biosynthesis of riboflavin.</text>
</comment>
<comment type="catalytic activity">
    <reaction evidence="1">
        <text>(2S)-2-hydroxy-3-oxobutyl phosphate + 5-amino-6-(D-ribitylamino)uracil = 6,7-dimethyl-8-(1-D-ribityl)lumazine + phosphate + 2 H2O + H(+)</text>
        <dbReference type="Rhea" id="RHEA:26152"/>
        <dbReference type="ChEBI" id="CHEBI:15377"/>
        <dbReference type="ChEBI" id="CHEBI:15378"/>
        <dbReference type="ChEBI" id="CHEBI:15934"/>
        <dbReference type="ChEBI" id="CHEBI:43474"/>
        <dbReference type="ChEBI" id="CHEBI:58201"/>
        <dbReference type="ChEBI" id="CHEBI:58830"/>
        <dbReference type="EC" id="2.5.1.78"/>
    </reaction>
</comment>
<comment type="pathway">
    <text evidence="1">Cofactor biosynthesis; riboflavin biosynthesis; riboflavin from 2-hydroxy-3-oxobutyl phosphate and 5-amino-6-(D-ribitylamino)uracil: step 1/2.</text>
</comment>
<comment type="subunit">
    <text evidence="1">Forms an icosahedral capsid composed of 60 subunits, arranged as a dodecamer of pentamers.</text>
</comment>
<comment type="similarity">
    <text evidence="1">Belongs to the DMRL synthase family.</text>
</comment>
<dbReference type="EC" id="2.5.1.78" evidence="1"/>
<dbReference type="EMBL" id="CP000712">
    <property type="protein sequence ID" value="ABQ76720.1"/>
    <property type="molecule type" value="Genomic_DNA"/>
</dbReference>
<dbReference type="SMR" id="A5VXW0"/>
<dbReference type="KEGG" id="ppf:Pput_0552"/>
<dbReference type="eggNOG" id="COG0054">
    <property type="taxonomic scope" value="Bacteria"/>
</dbReference>
<dbReference type="HOGENOM" id="CLU_089358_1_1_6"/>
<dbReference type="UniPathway" id="UPA00275">
    <property type="reaction ID" value="UER00404"/>
</dbReference>
<dbReference type="GO" id="GO:0005829">
    <property type="term" value="C:cytosol"/>
    <property type="evidence" value="ECO:0007669"/>
    <property type="project" value="TreeGrafter"/>
</dbReference>
<dbReference type="GO" id="GO:0009349">
    <property type="term" value="C:riboflavin synthase complex"/>
    <property type="evidence" value="ECO:0007669"/>
    <property type="project" value="InterPro"/>
</dbReference>
<dbReference type="GO" id="GO:0000906">
    <property type="term" value="F:6,7-dimethyl-8-ribityllumazine synthase activity"/>
    <property type="evidence" value="ECO:0007669"/>
    <property type="project" value="UniProtKB-UniRule"/>
</dbReference>
<dbReference type="GO" id="GO:0009231">
    <property type="term" value="P:riboflavin biosynthetic process"/>
    <property type="evidence" value="ECO:0007669"/>
    <property type="project" value="UniProtKB-UniRule"/>
</dbReference>
<dbReference type="CDD" id="cd09209">
    <property type="entry name" value="Lumazine_synthase-I"/>
    <property type="match status" value="1"/>
</dbReference>
<dbReference type="FunFam" id="3.40.50.960:FF:000001">
    <property type="entry name" value="6,7-dimethyl-8-ribityllumazine synthase"/>
    <property type="match status" value="1"/>
</dbReference>
<dbReference type="Gene3D" id="3.40.50.960">
    <property type="entry name" value="Lumazine/riboflavin synthase"/>
    <property type="match status" value="1"/>
</dbReference>
<dbReference type="HAMAP" id="MF_00178">
    <property type="entry name" value="Lumazine_synth"/>
    <property type="match status" value="1"/>
</dbReference>
<dbReference type="InterPro" id="IPR034964">
    <property type="entry name" value="LS"/>
</dbReference>
<dbReference type="InterPro" id="IPR002180">
    <property type="entry name" value="LS/RS"/>
</dbReference>
<dbReference type="InterPro" id="IPR036467">
    <property type="entry name" value="LS/RS_sf"/>
</dbReference>
<dbReference type="NCBIfam" id="TIGR00114">
    <property type="entry name" value="lumazine-synth"/>
    <property type="match status" value="1"/>
</dbReference>
<dbReference type="NCBIfam" id="NF000812">
    <property type="entry name" value="PRK00061.1-4"/>
    <property type="match status" value="1"/>
</dbReference>
<dbReference type="PANTHER" id="PTHR21058:SF0">
    <property type="entry name" value="6,7-DIMETHYL-8-RIBITYLLUMAZINE SYNTHASE"/>
    <property type="match status" value="1"/>
</dbReference>
<dbReference type="PANTHER" id="PTHR21058">
    <property type="entry name" value="6,7-DIMETHYL-8-RIBITYLLUMAZINE SYNTHASE DMRL SYNTHASE LUMAZINE SYNTHASE"/>
    <property type="match status" value="1"/>
</dbReference>
<dbReference type="Pfam" id="PF00885">
    <property type="entry name" value="DMRL_synthase"/>
    <property type="match status" value="1"/>
</dbReference>
<dbReference type="SUPFAM" id="SSF52121">
    <property type="entry name" value="Lumazine synthase"/>
    <property type="match status" value="1"/>
</dbReference>
<gene>
    <name evidence="1" type="primary">ribH</name>
    <name type="ordered locus">Pput_0552</name>
</gene>
<feature type="chain" id="PRO_1000040491" description="6,7-dimethyl-8-ribityllumazine synthase">
    <location>
        <begin position="1"/>
        <end position="158"/>
    </location>
</feature>
<feature type="active site" description="Proton donor" evidence="1">
    <location>
        <position position="90"/>
    </location>
</feature>
<feature type="binding site" evidence="1">
    <location>
        <position position="24"/>
    </location>
    <ligand>
        <name>5-amino-6-(D-ribitylamino)uracil</name>
        <dbReference type="ChEBI" id="CHEBI:15934"/>
    </ligand>
</feature>
<feature type="binding site" evidence="1">
    <location>
        <begin position="58"/>
        <end position="60"/>
    </location>
    <ligand>
        <name>5-amino-6-(D-ribitylamino)uracil</name>
        <dbReference type="ChEBI" id="CHEBI:15934"/>
    </ligand>
</feature>
<feature type="binding site" evidence="1">
    <location>
        <begin position="82"/>
        <end position="84"/>
    </location>
    <ligand>
        <name>5-amino-6-(D-ribitylamino)uracil</name>
        <dbReference type="ChEBI" id="CHEBI:15934"/>
    </ligand>
</feature>
<feature type="binding site" evidence="1">
    <location>
        <begin position="87"/>
        <end position="88"/>
    </location>
    <ligand>
        <name>(2S)-2-hydroxy-3-oxobutyl phosphate</name>
        <dbReference type="ChEBI" id="CHEBI:58830"/>
    </ligand>
</feature>
<feature type="binding site" evidence="1">
    <location>
        <position position="115"/>
    </location>
    <ligand>
        <name>5-amino-6-(D-ribitylamino)uracil</name>
        <dbReference type="ChEBI" id="CHEBI:15934"/>
    </ligand>
</feature>
<feature type="binding site" evidence="1">
    <location>
        <position position="129"/>
    </location>
    <ligand>
        <name>(2S)-2-hydroxy-3-oxobutyl phosphate</name>
        <dbReference type="ChEBI" id="CHEBI:58830"/>
    </ligand>
</feature>